<accession>Q8KA85</accession>
<evidence type="ECO:0000250" key="1"/>
<evidence type="ECO:0000255" key="2"/>
<evidence type="ECO:0000269" key="3">
    <source>
    </source>
</evidence>
<evidence type="ECO:0000305" key="4"/>
<evidence type="ECO:0007829" key="5">
    <source>
        <dbReference type="PDB" id="3CP8"/>
    </source>
</evidence>
<name>MNMG_CHLTE</name>
<gene>
    <name type="primary">mnmG</name>
    <name type="synonym">gidA</name>
    <name type="ordered locus">CT2283</name>
</gene>
<proteinExistence type="evidence at protein level"/>
<sequence>MYDVIVVGAGHAGCEAALAVARGGLHCLLITSDLSAVARMSCNPAIGGVAKGQITREIDALGGEMGKAIDATGIQFRMLNRSKGPAMHSPRAQADKTQYSLYMRRIVEHEPNIDLLQDTVIGVSANSGKFSSVTVRSGRAIQAKAAILACGTFLNGLIHIGMDHFPGGRSTAEPPVEGLTESLASLGFSFGRLKTGTPPRIDSRSVDYTIVTEQPGDVDPVPFSFSSTSVANRNLVSCYLTKTTEKTHDILRTGFDRSPLFTGKVQGVGPRYCPSIEDKISRFPDKSSHHIFLEPEGTDTVEMYVNGFSTSLPEDIQIAGLRSIPGLEEAKMIRPGYAIEYDFFHPWQIRSTMETRPVENLFFAGQINGTSGYEEAAAQGLMAGINAVRKILGKELIVLGRDQAYIGVLIDDLITKETKEPYRMFTSSAEHRLILRHDNADLRLRKIGYDCNLVSSDDLHRTESIIKRVQHCLEVMKTAKVTPAEINTLLMNKGLQELKTPARALSLIKRPGISLQDILEHSLSVRSAAEELCNDPRVAEQVQIEIKYEGYIKREQLVADRIARLDSLHIPDNFNYDSLNSLSSEGREKLLKHRPATIGQASRILGVSPSDVSILMIRLGR</sequence>
<feature type="chain" id="PRO_0000117086" description="tRNA uridine 5-carboxymethylaminomethyl modification enzyme MnmG">
    <location>
        <begin position="1"/>
        <end position="621"/>
    </location>
</feature>
<feature type="binding site" evidence="3">
    <location>
        <begin position="8"/>
        <end position="13"/>
    </location>
    <ligand>
        <name>FAD</name>
        <dbReference type="ChEBI" id="CHEBI:57692"/>
    </ligand>
</feature>
<feature type="binding site" evidence="3">
    <location>
        <position position="120"/>
    </location>
    <ligand>
        <name>FAD</name>
        <dbReference type="ChEBI" id="CHEBI:57692"/>
    </ligand>
</feature>
<feature type="binding site" evidence="2">
    <location>
        <begin position="269"/>
        <end position="283"/>
    </location>
    <ligand>
        <name>NAD(+)</name>
        <dbReference type="ChEBI" id="CHEBI:57540"/>
    </ligand>
</feature>
<feature type="binding site" evidence="3">
    <location>
        <position position="366"/>
    </location>
    <ligand>
        <name>FAD</name>
        <dbReference type="ChEBI" id="CHEBI:57692"/>
    </ligand>
</feature>
<feature type="strand" evidence="5">
    <location>
        <begin position="2"/>
        <end position="7"/>
    </location>
</feature>
<feature type="helix" evidence="5">
    <location>
        <begin position="11"/>
        <end position="22"/>
    </location>
</feature>
<feature type="strand" evidence="5">
    <location>
        <begin position="27"/>
        <end position="32"/>
    </location>
</feature>
<feature type="helix" evidence="5">
    <location>
        <begin position="34"/>
        <end position="36"/>
    </location>
</feature>
<feature type="strand" evidence="5">
    <location>
        <begin position="44"/>
        <end position="47"/>
    </location>
</feature>
<feature type="helix" evidence="5">
    <location>
        <begin position="49"/>
        <end position="61"/>
    </location>
</feature>
<feature type="helix" evidence="5">
    <location>
        <begin position="65"/>
        <end position="72"/>
    </location>
</feature>
<feature type="strand" evidence="5">
    <location>
        <begin position="73"/>
        <end position="79"/>
    </location>
</feature>
<feature type="strand" evidence="5">
    <location>
        <begin position="81"/>
        <end position="83"/>
    </location>
</feature>
<feature type="turn" evidence="5">
    <location>
        <begin position="85"/>
        <end position="87"/>
    </location>
</feature>
<feature type="strand" evidence="5">
    <location>
        <begin position="89"/>
        <end position="94"/>
    </location>
</feature>
<feature type="helix" evidence="5">
    <location>
        <begin position="96"/>
        <end position="108"/>
    </location>
</feature>
<feature type="strand" evidence="5">
    <location>
        <begin position="113"/>
        <end position="117"/>
    </location>
</feature>
<feature type="strand" evidence="5">
    <location>
        <begin position="120"/>
        <end position="126"/>
    </location>
</feature>
<feature type="strand" evidence="5">
    <location>
        <begin position="129"/>
        <end position="135"/>
    </location>
</feature>
<feature type="strand" evidence="5">
    <location>
        <begin position="140"/>
        <end position="148"/>
    </location>
</feature>
<feature type="strand" evidence="5">
    <location>
        <begin position="157"/>
        <end position="160"/>
    </location>
</feature>
<feature type="strand" evidence="5">
    <location>
        <begin position="163"/>
        <end position="166"/>
    </location>
</feature>
<feature type="strand" evidence="5">
    <location>
        <begin position="168"/>
        <end position="170"/>
    </location>
</feature>
<feature type="helix" evidence="5">
    <location>
        <begin position="179"/>
        <end position="185"/>
    </location>
</feature>
<feature type="strand" evidence="5">
    <location>
        <begin position="190"/>
        <end position="197"/>
    </location>
</feature>
<feature type="strand" evidence="5">
    <location>
        <begin position="200"/>
        <end position="202"/>
    </location>
</feature>
<feature type="helix" evidence="5">
    <location>
        <begin position="203"/>
        <end position="205"/>
    </location>
</feature>
<feature type="turn" evidence="5">
    <location>
        <begin position="208"/>
        <end position="210"/>
    </location>
</feature>
<feature type="strand" evidence="5">
    <location>
        <begin position="211"/>
        <end position="214"/>
    </location>
</feature>
<feature type="strand" evidence="5">
    <location>
        <begin position="223"/>
        <end position="226"/>
    </location>
</feature>
<feature type="helix" evidence="5">
    <location>
        <begin position="231"/>
        <end position="233"/>
    </location>
</feature>
<feature type="strand" evidence="5">
    <location>
        <begin position="238"/>
        <end position="242"/>
    </location>
</feature>
<feature type="helix" evidence="5">
    <location>
        <begin position="245"/>
        <end position="252"/>
    </location>
</feature>
<feature type="turn" evidence="5">
    <location>
        <begin position="253"/>
        <end position="257"/>
    </location>
</feature>
<feature type="helix" evidence="5">
    <location>
        <begin position="277"/>
        <end position="282"/>
    </location>
</feature>
<feature type="strand" evidence="5">
    <location>
        <begin position="290"/>
        <end position="297"/>
    </location>
</feature>
<feature type="strand" evidence="5">
    <location>
        <begin position="302"/>
        <end position="306"/>
    </location>
</feature>
<feature type="helix" evidence="5">
    <location>
        <begin position="314"/>
        <end position="321"/>
    </location>
</feature>
<feature type="strand" evidence="5">
    <location>
        <begin position="332"/>
        <end position="334"/>
    </location>
</feature>
<feature type="strand" evidence="5">
    <location>
        <begin position="337"/>
        <end position="344"/>
    </location>
</feature>
<feature type="helix" evidence="5">
    <location>
        <begin position="346"/>
        <end position="348"/>
    </location>
</feature>
<feature type="strand" evidence="5">
    <location>
        <begin position="353"/>
        <end position="359"/>
    </location>
</feature>
<feature type="strand" evidence="5">
    <location>
        <begin position="361"/>
        <end position="363"/>
    </location>
</feature>
<feature type="helix" evidence="5">
    <location>
        <begin position="366"/>
        <end position="368"/>
    </location>
</feature>
<feature type="helix" evidence="5">
    <location>
        <begin position="373"/>
        <end position="392"/>
    </location>
</feature>
<feature type="turn" evidence="5">
    <location>
        <begin position="401"/>
        <end position="403"/>
    </location>
</feature>
<feature type="helix" evidence="5">
    <location>
        <begin position="405"/>
        <end position="415"/>
    </location>
</feature>
<feature type="turn" evidence="5">
    <location>
        <begin position="424"/>
        <end position="426"/>
    </location>
</feature>
<feature type="helix" evidence="5">
    <location>
        <begin position="433"/>
        <end position="435"/>
    </location>
</feature>
<feature type="helix" evidence="5">
    <location>
        <begin position="437"/>
        <end position="439"/>
    </location>
</feature>
<feature type="helix" evidence="5">
    <location>
        <begin position="440"/>
        <end position="450"/>
    </location>
</feature>
<feature type="helix" evidence="5">
    <location>
        <begin position="456"/>
        <end position="478"/>
    </location>
</feature>
<feature type="helix" evidence="5">
    <location>
        <begin position="483"/>
        <end position="493"/>
    </location>
</feature>
<feature type="helix" evidence="5">
    <location>
        <begin position="505"/>
        <end position="508"/>
    </location>
</feature>
<feature type="strand" evidence="5">
    <location>
        <begin position="509"/>
        <end position="512"/>
    </location>
</feature>
<feature type="helix" evidence="5">
    <location>
        <begin position="515"/>
        <end position="519"/>
    </location>
</feature>
<feature type="helix" evidence="5">
    <location>
        <begin position="523"/>
        <end position="528"/>
    </location>
</feature>
<feature type="helix" evidence="5">
    <location>
        <begin position="531"/>
        <end position="534"/>
    </location>
</feature>
<feature type="helix" evidence="5">
    <location>
        <begin position="536"/>
        <end position="547"/>
    </location>
</feature>
<feature type="helix" evidence="5">
    <location>
        <begin position="549"/>
        <end position="565"/>
    </location>
</feature>
<feature type="strand" evidence="5">
    <location>
        <begin position="572"/>
        <end position="574"/>
    </location>
</feature>
<feature type="helix" evidence="5">
    <location>
        <begin position="586"/>
        <end position="593"/>
    </location>
</feature>
<feature type="helix" evidence="5">
    <location>
        <begin position="598"/>
        <end position="601"/>
    </location>
</feature>
<feature type="helix" evidence="5">
    <location>
        <begin position="609"/>
        <end position="616"/>
    </location>
</feature>
<keyword id="KW-0002">3D-structure</keyword>
<keyword id="KW-0963">Cytoplasm</keyword>
<keyword id="KW-0274">FAD</keyword>
<keyword id="KW-0285">Flavoprotein</keyword>
<keyword id="KW-0520">NAD</keyword>
<keyword id="KW-1185">Reference proteome</keyword>
<keyword id="KW-0819">tRNA processing</keyword>
<dbReference type="EMBL" id="AE006470">
    <property type="protein sequence ID" value="AAM73496.1"/>
    <property type="molecule type" value="Genomic_DNA"/>
</dbReference>
<dbReference type="RefSeq" id="NP_663154.1">
    <property type="nucleotide sequence ID" value="NC_002932.3"/>
</dbReference>
<dbReference type="RefSeq" id="WP_010933931.1">
    <property type="nucleotide sequence ID" value="NC_002932.3"/>
</dbReference>
<dbReference type="PDB" id="3CP8">
    <property type="method" value="X-ray"/>
    <property type="resolution" value="3.20 A"/>
    <property type="chains" value="A/B/C/D=1-621"/>
</dbReference>
<dbReference type="PDBsum" id="3CP8"/>
<dbReference type="SMR" id="Q8KA85"/>
<dbReference type="STRING" id="194439.CT2283"/>
<dbReference type="EnsemblBacteria" id="AAM73496">
    <property type="protein sequence ID" value="AAM73496"/>
    <property type="gene ID" value="CT2283"/>
</dbReference>
<dbReference type="KEGG" id="cte:CT2283"/>
<dbReference type="PATRIC" id="fig|194439.7.peg.2076"/>
<dbReference type="eggNOG" id="COG0445">
    <property type="taxonomic scope" value="Bacteria"/>
</dbReference>
<dbReference type="HOGENOM" id="CLU_007831_2_2_10"/>
<dbReference type="OrthoDB" id="9815560at2"/>
<dbReference type="EvolutionaryTrace" id="Q8KA85"/>
<dbReference type="Proteomes" id="UP000001007">
    <property type="component" value="Chromosome"/>
</dbReference>
<dbReference type="GO" id="GO:0005829">
    <property type="term" value="C:cytosol"/>
    <property type="evidence" value="ECO:0007669"/>
    <property type="project" value="TreeGrafter"/>
</dbReference>
<dbReference type="GO" id="GO:0050660">
    <property type="term" value="F:flavin adenine dinucleotide binding"/>
    <property type="evidence" value="ECO:0007669"/>
    <property type="project" value="UniProtKB-UniRule"/>
</dbReference>
<dbReference type="GO" id="GO:0030488">
    <property type="term" value="P:tRNA methylation"/>
    <property type="evidence" value="ECO:0007669"/>
    <property type="project" value="TreeGrafter"/>
</dbReference>
<dbReference type="GO" id="GO:0002098">
    <property type="term" value="P:tRNA wobble uridine modification"/>
    <property type="evidence" value="ECO:0007669"/>
    <property type="project" value="InterPro"/>
</dbReference>
<dbReference type="FunFam" id="1.10.150.570:FF:000001">
    <property type="entry name" value="tRNA uridine 5-carboxymethylaminomethyl modification enzyme MnmG"/>
    <property type="match status" value="1"/>
</dbReference>
<dbReference type="FunFam" id="3.50.50.60:FF:000002">
    <property type="entry name" value="tRNA uridine 5-carboxymethylaminomethyl modification enzyme MnmG"/>
    <property type="match status" value="1"/>
</dbReference>
<dbReference type="Gene3D" id="3.50.50.60">
    <property type="entry name" value="FAD/NAD(P)-binding domain"/>
    <property type="match status" value="2"/>
</dbReference>
<dbReference type="Gene3D" id="1.10.150.570">
    <property type="entry name" value="GidA associated domain, C-terminal subdomain"/>
    <property type="match status" value="1"/>
</dbReference>
<dbReference type="Gene3D" id="1.10.10.1800">
    <property type="entry name" value="tRNA uridine 5-carboxymethylaminomethyl modification enzyme MnmG/GidA"/>
    <property type="match status" value="1"/>
</dbReference>
<dbReference type="HAMAP" id="MF_00129">
    <property type="entry name" value="MnmG_GidA"/>
    <property type="match status" value="1"/>
</dbReference>
<dbReference type="InterPro" id="IPR036188">
    <property type="entry name" value="FAD/NAD-bd_sf"/>
</dbReference>
<dbReference type="InterPro" id="IPR049312">
    <property type="entry name" value="GIDA_C_N"/>
</dbReference>
<dbReference type="InterPro" id="IPR004416">
    <property type="entry name" value="MnmG"/>
</dbReference>
<dbReference type="InterPro" id="IPR002218">
    <property type="entry name" value="MnmG-rel"/>
</dbReference>
<dbReference type="InterPro" id="IPR020595">
    <property type="entry name" value="MnmG-rel_CS"/>
</dbReference>
<dbReference type="InterPro" id="IPR026904">
    <property type="entry name" value="MnmG_C"/>
</dbReference>
<dbReference type="InterPro" id="IPR047001">
    <property type="entry name" value="MnmG_C_subdom"/>
</dbReference>
<dbReference type="InterPro" id="IPR044920">
    <property type="entry name" value="MnmG_C_subdom_sf"/>
</dbReference>
<dbReference type="InterPro" id="IPR040131">
    <property type="entry name" value="MnmG_N"/>
</dbReference>
<dbReference type="NCBIfam" id="TIGR00136">
    <property type="entry name" value="mnmG_gidA"/>
    <property type="match status" value="1"/>
</dbReference>
<dbReference type="PANTHER" id="PTHR11806">
    <property type="entry name" value="GLUCOSE INHIBITED DIVISION PROTEIN A"/>
    <property type="match status" value="1"/>
</dbReference>
<dbReference type="PANTHER" id="PTHR11806:SF0">
    <property type="entry name" value="PROTEIN MTO1 HOMOLOG, MITOCHONDRIAL"/>
    <property type="match status" value="1"/>
</dbReference>
<dbReference type="Pfam" id="PF01134">
    <property type="entry name" value="GIDA"/>
    <property type="match status" value="1"/>
</dbReference>
<dbReference type="Pfam" id="PF21680">
    <property type="entry name" value="GIDA_C_1st"/>
    <property type="match status" value="1"/>
</dbReference>
<dbReference type="Pfam" id="PF13932">
    <property type="entry name" value="SAM_GIDA_C"/>
    <property type="match status" value="1"/>
</dbReference>
<dbReference type="SMART" id="SM01228">
    <property type="entry name" value="GIDA_assoc_3"/>
    <property type="match status" value="1"/>
</dbReference>
<dbReference type="SUPFAM" id="SSF51905">
    <property type="entry name" value="FAD/NAD(P)-binding domain"/>
    <property type="match status" value="1"/>
</dbReference>
<dbReference type="PROSITE" id="PS01280">
    <property type="entry name" value="GIDA_1"/>
    <property type="match status" value="1"/>
</dbReference>
<dbReference type="PROSITE" id="PS01281">
    <property type="entry name" value="GIDA_2"/>
    <property type="match status" value="1"/>
</dbReference>
<comment type="function">
    <text evidence="1">NAD-binding protein involved in the addition of a carboxymethylaminomethyl (cmnm) group at the wobble position (U34) of certain tRNAs, forming tRNA-cmnm(5)s(2)U34.</text>
</comment>
<comment type="cofactor">
    <cofactor>
        <name>FAD</name>
        <dbReference type="ChEBI" id="CHEBI:57692"/>
    </cofactor>
</comment>
<comment type="subunit">
    <text evidence="1">Homodimer. Heterotetramer of two MnmE and two MnmG subunits (By similarity).</text>
</comment>
<comment type="subcellular location">
    <subcellularLocation>
        <location evidence="1">Cytoplasm</location>
    </subcellularLocation>
</comment>
<comment type="similarity">
    <text evidence="4">Belongs to the MnmG family.</text>
</comment>
<protein>
    <recommendedName>
        <fullName>tRNA uridine 5-carboxymethylaminomethyl modification enzyme MnmG</fullName>
    </recommendedName>
    <alternativeName>
        <fullName>Glucose-inhibited division protein A</fullName>
    </alternativeName>
</protein>
<organism>
    <name type="scientific">Chlorobaculum tepidum (strain ATCC 49652 / DSM 12025 / NBRC 103806 / TLS)</name>
    <name type="common">Chlorobium tepidum</name>
    <dbReference type="NCBI Taxonomy" id="194439"/>
    <lineage>
        <taxon>Bacteria</taxon>
        <taxon>Pseudomonadati</taxon>
        <taxon>Chlorobiota</taxon>
        <taxon>Chlorobiia</taxon>
        <taxon>Chlorobiales</taxon>
        <taxon>Chlorobiaceae</taxon>
        <taxon>Chlorobaculum</taxon>
    </lineage>
</organism>
<reference key="1">
    <citation type="journal article" date="2002" name="Proc. Natl. Acad. Sci. U.S.A.">
        <title>The complete genome sequence of Chlorobium tepidum TLS, a photosynthetic, anaerobic, green-sulfur bacterium.</title>
        <authorList>
            <person name="Eisen J.A."/>
            <person name="Nelson K.E."/>
            <person name="Paulsen I.T."/>
            <person name="Heidelberg J.F."/>
            <person name="Wu M."/>
            <person name="Dodson R.J."/>
            <person name="DeBoy R.T."/>
            <person name="Gwinn M.L."/>
            <person name="Nelson W.C."/>
            <person name="Haft D.H."/>
            <person name="Hickey E.K."/>
            <person name="Peterson J.D."/>
            <person name="Durkin A.S."/>
            <person name="Kolonay J.F."/>
            <person name="Yang F."/>
            <person name="Holt I.E."/>
            <person name="Umayam L.A."/>
            <person name="Mason T.M."/>
            <person name="Brenner M."/>
            <person name="Shea T.P."/>
            <person name="Parksey D.S."/>
            <person name="Nierman W.C."/>
            <person name="Feldblyum T.V."/>
            <person name="Hansen C.L."/>
            <person name="Craven M.B."/>
            <person name="Radune D."/>
            <person name="Vamathevan J.J."/>
            <person name="Khouri H.M."/>
            <person name="White O."/>
            <person name="Gruber T.M."/>
            <person name="Ketchum K.A."/>
            <person name="Venter J.C."/>
            <person name="Tettelin H."/>
            <person name="Bryant D.A."/>
            <person name="Fraser C.M."/>
        </authorList>
    </citation>
    <scope>NUCLEOTIDE SEQUENCE [LARGE SCALE GENOMIC DNA]</scope>
    <source>
        <strain>ATCC 49652 / DSM 12025 / NBRC 103806 / TLS</strain>
    </source>
</reference>
<reference key="2">
    <citation type="journal article" date="2008" name="J. Mol. Biol.">
        <title>Crystal structures of the conserved tRNA-modifying enzyme GidA: implications for its interaction with MnmE and substrate.</title>
        <authorList>
            <person name="Meyer S."/>
            <person name="Scrima A."/>
            <person name="Versees W."/>
            <person name="Wittinghofer A."/>
        </authorList>
    </citation>
    <scope>X-RAY CRYSTALLOGRAPHY (3.2 ANGSTROMS) IN COMPLEX WITH FAD</scope>
    <scope>SUBUNIT</scope>
</reference>